<dbReference type="EC" id="6.3.2.6" evidence="1"/>
<dbReference type="EMBL" id="CP000885">
    <property type="protein sequence ID" value="ABX43402.1"/>
    <property type="molecule type" value="Genomic_DNA"/>
</dbReference>
<dbReference type="RefSeq" id="WP_012201053.1">
    <property type="nucleotide sequence ID" value="NC_010001.1"/>
</dbReference>
<dbReference type="SMR" id="A9KQ90"/>
<dbReference type="STRING" id="357809.Cphy_3045"/>
<dbReference type="KEGG" id="cpy:Cphy_3045"/>
<dbReference type="eggNOG" id="COG0152">
    <property type="taxonomic scope" value="Bacteria"/>
</dbReference>
<dbReference type="HOGENOM" id="CLU_061495_2_0_9"/>
<dbReference type="OrthoDB" id="9801549at2"/>
<dbReference type="UniPathway" id="UPA00074">
    <property type="reaction ID" value="UER00131"/>
</dbReference>
<dbReference type="Proteomes" id="UP000000370">
    <property type="component" value="Chromosome"/>
</dbReference>
<dbReference type="GO" id="GO:0005524">
    <property type="term" value="F:ATP binding"/>
    <property type="evidence" value="ECO:0007669"/>
    <property type="project" value="UniProtKB-KW"/>
</dbReference>
<dbReference type="GO" id="GO:0004639">
    <property type="term" value="F:phosphoribosylaminoimidazolesuccinocarboxamide synthase activity"/>
    <property type="evidence" value="ECO:0007669"/>
    <property type="project" value="UniProtKB-UniRule"/>
</dbReference>
<dbReference type="GO" id="GO:0006189">
    <property type="term" value="P:'de novo' IMP biosynthetic process"/>
    <property type="evidence" value="ECO:0007669"/>
    <property type="project" value="UniProtKB-UniRule"/>
</dbReference>
<dbReference type="GO" id="GO:0009236">
    <property type="term" value="P:cobalamin biosynthetic process"/>
    <property type="evidence" value="ECO:0007669"/>
    <property type="project" value="InterPro"/>
</dbReference>
<dbReference type="CDD" id="cd01415">
    <property type="entry name" value="SAICAR_synt_PurC"/>
    <property type="match status" value="1"/>
</dbReference>
<dbReference type="FunFam" id="3.30.470.20:FF:000006">
    <property type="entry name" value="Phosphoribosylaminoimidazole-succinocarboxamide synthase"/>
    <property type="match status" value="1"/>
</dbReference>
<dbReference type="Gene3D" id="3.30.470.20">
    <property type="entry name" value="ATP-grasp fold, B domain"/>
    <property type="match status" value="1"/>
</dbReference>
<dbReference type="Gene3D" id="3.30.200.20">
    <property type="entry name" value="Phosphorylase Kinase, domain 1"/>
    <property type="match status" value="1"/>
</dbReference>
<dbReference type="HAMAP" id="MF_00137">
    <property type="entry name" value="SAICAR_synth"/>
    <property type="match status" value="1"/>
</dbReference>
<dbReference type="InterPro" id="IPR028923">
    <property type="entry name" value="SAICAR_synt/ADE2_N"/>
</dbReference>
<dbReference type="InterPro" id="IPR033934">
    <property type="entry name" value="SAICAR_synt_PurC"/>
</dbReference>
<dbReference type="InterPro" id="IPR001636">
    <property type="entry name" value="SAICAR_synth"/>
</dbReference>
<dbReference type="InterPro" id="IPR050089">
    <property type="entry name" value="SAICAR_synthetase"/>
</dbReference>
<dbReference type="InterPro" id="IPR018236">
    <property type="entry name" value="SAICAR_synthetase_CS"/>
</dbReference>
<dbReference type="NCBIfam" id="TIGR00081">
    <property type="entry name" value="purC"/>
    <property type="match status" value="1"/>
</dbReference>
<dbReference type="PANTHER" id="PTHR43599">
    <property type="entry name" value="MULTIFUNCTIONAL PROTEIN ADE2"/>
    <property type="match status" value="1"/>
</dbReference>
<dbReference type="PANTHER" id="PTHR43599:SF3">
    <property type="entry name" value="SI:DKEY-6E2.2"/>
    <property type="match status" value="1"/>
</dbReference>
<dbReference type="Pfam" id="PF01259">
    <property type="entry name" value="SAICAR_synt"/>
    <property type="match status" value="1"/>
</dbReference>
<dbReference type="SUPFAM" id="SSF56104">
    <property type="entry name" value="SAICAR synthase-like"/>
    <property type="match status" value="1"/>
</dbReference>
<dbReference type="PROSITE" id="PS01057">
    <property type="entry name" value="SAICAR_SYNTHETASE_1"/>
    <property type="match status" value="1"/>
</dbReference>
<dbReference type="PROSITE" id="PS01058">
    <property type="entry name" value="SAICAR_SYNTHETASE_2"/>
    <property type="match status" value="1"/>
</dbReference>
<keyword id="KW-0067">ATP-binding</keyword>
<keyword id="KW-0436">Ligase</keyword>
<keyword id="KW-0547">Nucleotide-binding</keyword>
<keyword id="KW-0658">Purine biosynthesis</keyword>
<keyword id="KW-1185">Reference proteome</keyword>
<gene>
    <name evidence="1" type="primary">purC</name>
    <name type="ordered locus">Cphy_3045</name>
</gene>
<protein>
    <recommendedName>
        <fullName evidence="1">Phosphoribosylaminoimidazole-succinocarboxamide synthase</fullName>
        <ecNumber evidence="1">6.3.2.6</ecNumber>
    </recommendedName>
    <alternativeName>
        <fullName evidence="1">SAICAR synthetase</fullName>
    </alternativeName>
</protein>
<feature type="chain" id="PRO_1000076451" description="Phosphoribosylaminoimidazole-succinocarboxamide synthase">
    <location>
        <begin position="1"/>
        <end position="235"/>
    </location>
</feature>
<proteinExistence type="inferred from homology"/>
<evidence type="ECO:0000255" key="1">
    <source>
        <dbReference type="HAMAP-Rule" id="MF_00137"/>
    </source>
</evidence>
<accession>A9KQ90</accession>
<organism>
    <name type="scientific">Lachnoclostridium phytofermentans (strain ATCC 700394 / DSM 18823 / ISDg)</name>
    <name type="common">Clostridium phytofermentans</name>
    <dbReference type="NCBI Taxonomy" id="357809"/>
    <lineage>
        <taxon>Bacteria</taxon>
        <taxon>Bacillati</taxon>
        <taxon>Bacillota</taxon>
        <taxon>Clostridia</taxon>
        <taxon>Lachnospirales</taxon>
        <taxon>Lachnospiraceae</taxon>
    </lineage>
</organism>
<sequence length="235" mass="26948">MKKLEQLYEGKAKKVYKTDVEDVLIVDYKDDATAFNGEKRGTIVGKGVINNRMSNYIMKQLEKEGVPTHYIEELSDRETAVKKVQIVPLEVIIRNVSAGSFAKKLGIEEGRKLLCPTLEFSYKDDSLGDPMINSSYAKALGLATQEEIDTISTYAYKVNEVMIKYFEGIGIELIDFKIEFGRYHDQIILADEISPDTCRLWDIKTHEKLDKDRFRRDLGNVEDAYLEVFKRLGIE</sequence>
<name>PUR7_LACP7</name>
<comment type="catalytic activity">
    <reaction evidence="1">
        <text>5-amino-1-(5-phospho-D-ribosyl)imidazole-4-carboxylate + L-aspartate + ATP = (2S)-2-[5-amino-1-(5-phospho-beta-D-ribosyl)imidazole-4-carboxamido]succinate + ADP + phosphate + 2 H(+)</text>
        <dbReference type="Rhea" id="RHEA:22628"/>
        <dbReference type="ChEBI" id="CHEBI:15378"/>
        <dbReference type="ChEBI" id="CHEBI:29991"/>
        <dbReference type="ChEBI" id="CHEBI:30616"/>
        <dbReference type="ChEBI" id="CHEBI:43474"/>
        <dbReference type="ChEBI" id="CHEBI:58443"/>
        <dbReference type="ChEBI" id="CHEBI:77657"/>
        <dbReference type="ChEBI" id="CHEBI:456216"/>
        <dbReference type="EC" id="6.3.2.6"/>
    </reaction>
</comment>
<comment type="pathway">
    <text evidence="1">Purine metabolism; IMP biosynthesis via de novo pathway; 5-amino-1-(5-phospho-D-ribosyl)imidazole-4-carboxamide from 5-amino-1-(5-phospho-D-ribosyl)imidazole-4-carboxylate: step 1/2.</text>
</comment>
<comment type="similarity">
    <text evidence="1">Belongs to the SAICAR synthetase family.</text>
</comment>
<reference key="1">
    <citation type="submission" date="2007-11" db="EMBL/GenBank/DDBJ databases">
        <title>Complete genome sequence of Clostridium phytofermentans ISDg.</title>
        <authorList>
            <person name="Leschine S.B."/>
            <person name="Warnick T.A."/>
            <person name="Blanchard J.L."/>
            <person name="Schnell D.J."/>
            <person name="Petit E.L."/>
            <person name="LaTouf W.G."/>
            <person name="Copeland A."/>
            <person name="Lucas S."/>
            <person name="Lapidus A."/>
            <person name="Barry K."/>
            <person name="Glavina del Rio T."/>
            <person name="Dalin E."/>
            <person name="Tice H."/>
            <person name="Pitluck S."/>
            <person name="Kiss H."/>
            <person name="Brettin T."/>
            <person name="Bruce D."/>
            <person name="Detter J.C."/>
            <person name="Han C."/>
            <person name="Kuske C."/>
            <person name="Schmutz J."/>
            <person name="Larimer F."/>
            <person name="Land M."/>
            <person name="Hauser L."/>
            <person name="Kyrpides N."/>
            <person name="Kim E.A."/>
            <person name="Richardson P."/>
        </authorList>
    </citation>
    <scope>NUCLEOTIDE SEQUENCE [LARGE SCALE GENOMIC DNA]</scope>
    <source>
        <strain>ATCC 700394 / DSM 18823 / ISDg</strain>
    </source>
</reference>